<reference key="1">
    <citation type="submission" date="2006-09" db="EMBL/GenBank/DDBJ databases">
        <title>NISC comparative sequencing initiative.</title>
        <authorList>
            <person name="Antonellis A."/>
            <person name="Ayele K."/>
            <person name="Benjamin B."/>
            <person name="Blakesley R.W."/>
            <person name="Boakye A."/>
            <person name="Bouffard G.G."/>
            <person name="Brinkley C."/>
            <person name="Brooks S."/>
            <person name="Chu G."/>
            <person name="Coleman H."/>
            <person name="Engle J."/>
            <person name="Gestole M."/>
            <person name="Greene A."/>
            <person name="Guan X."/>
            <person name="Gupta J."/>
            <person name="Haghighi P."/>
            <person name="Han J."/>
            <person name="Hansen N."/>
            <person name="Ho S.-L."/>
            <person name="Hu P."/>
            <person name="Hunter G."/>
            <person name="Hurle B."/>
            <person name="Idol J.R."/>
            <person name="Kwong P."/>
            <person name="Laric P."/>
            <person name="Larson S."/>
            <person name="Lee-Lin S.-Q."/>
            <person name="Legaspi R."/>
            <person name="Madden M."/>
            <person name="Maduro Q.L."/>
            <person name="Maduro V.B."/>
            <person name="Margulies E.H."/>
            <person name="Masiello C."/>
            <person name="Maskeri B."/>
            <person name="McDowell J."/>
            <person name="Mojidi H.A."/>
            <person name="Mullikin J.C."/>
            <person name="Oestreicher J.S."/>
            <person name="Park M."/>
            <person name="Portnoy M.E."/>
            <person name="Prasad A."/>
            <person name="Puri O."/>
            <person name="Reddix-Dugue N."/>
            <person name="Schandler K."/>
            <person name="Schueler M.G."/>
            <person name="Sison C."/>
            <person name="Stantripop S."/>
            <person name="Stephen E."/>
            <person name="Taye A."/>
            <person name="Thomas J.W."/>
            <person name="Thomas P.J."/>
            <person name="Tsipouri V."/>
            <person name="Ung L."/>
            <person name="Vogt J.L."/>
            <person name="Wetherby K.D."/>
            <person name="Young A."/>
            <person name="Green E.D."/>
        </authorList>
    </citation>
    <scope>NUCLEOTIDE SEQUENCE [LARGE SCALE GENOMIC DNA]</scope>
</reference>
<organism>
    <name type="scientific">Dasypus novemcinctus</name>
    <name type="common">Nine-banded armadillo</name>
    <dbReference type="NCBI Taxonomy" id="9361"/>
    <lineage>
        <taxon>Eukaryota</taxon>
        <taxon>Metazoa</taxon>
        <taxon>Chordata</taxon>
        <taxon>Craniata</taxon>
        <taxon>Vertebrata</taxon>
        <taxon>Euteleostomi</taxon>
        <taxon>Mammalia</taxon>
        <taxon>Eutheria</taxon>
        <taxon>Xenarthra</taxon>
        <taxon>Cingulata</taxon>
        <taxon>Dasypodidae</taxon>
        <taxon>Dasypus</taxon>
    </lineage>
</organism>
<evidence type="ECO:0000250" key="1"/>
<evidence type="ECO:0000250" key="2">
    <source>
        <dbReference type="UniProtKB" id="P41350"/>
    </source>
</evidence>
<evidence type="ECO:0000250" key="3">
    <source>
        <dbReference type="UniProtKB" id="P49817"/>
    </source>
</evidence>
<evidence type="ECO:0000250" key="4">
    <source>
        <dbReference type="UniProtKB" id="Q03135"/>
    </source>
</evidence>
<evidence type="ECO:0000250" key="5">
    <source>
        <dbReference type="UniProtKB" id="Q2IBA5"/>
    </source>
</evidence>
<evidence type="ECO:0000255" key="6"/>
<evidence type="ECO:0000305" key="7"/>
<dbReference type="EMBL" id="DP000181">
    <property type="protein sequence ID" value="ABI93627.1"/>
    <property type="molecule type" value="Genomic_DNA"/>
</dbReference>
<dbReference type="SMR" id="Q07E49"/>
<dbReference type="TreeFam" id="TF315736"/>
<dbReference type="GO" id="GO:0005901">
    <property type="term" value="C:caveola"/>
    <property type="evidence" value="ECO:0000250"/>
    <property type="project" value="UniProtKB"/>
</dbReference>
<dbReference type="GO" id="GO:0005768">
    <property type="term" value="C:endosome"/>
    <property type="evidence" value="ECO:0000250"/>
    <property type="project" value="UniProtKB"/>
</dbReference>
<dbReference type="GO" id="GO:0005925">
    <property type="term" value="C:focal adhesion"/>
    <property type="evidence" value="ECO:0007669"/>
    <property type="project" value="TreeGrafter"/>
</dbReference>
<dbReference type="GO" id="GO:0000139">
    <property type="term" value="C:Golgi membrane"/>
    <property type="evidence" value="ECO:0007669"/>
    <property type="project" value="UniProtKB-SubCell"/>
</dbReference>
<dbReference type="GO" id="GO:0045121">
    <property type="term" value="C:membrane raft"/>
    <property type="evidence" value="ECO:0000250"/>
    <property type="project" value="UniProtKB"/>
</dbReference>
<dbReference type="GO" id="GO:0048471">
    <property type="term" value="C:perinuclear region of cytoplasm"/>
    <property type="evidence" value="ECO:0007669"/>
    <property type="project" value="TreeGrafter"/>
</dbReference>
<dbReference type="GO" id="GO:0042383">
    <property type="term" value="C:sarcolemma"/>
    <property type="evidence" value="ECO:0007669"/>
    <property type="project" value="TreeGrafter"/>
</dbReference>
<dbReference type="GO" id="GO:0060090">
    <property type="term" value="F:molecular adaptor activity"/>
    <property type="evidence" value="ECO:0007669"/>
    <property type="project" value="TreeGrafter"/>
</dbReference>
<dbReference type="GO" id="GO:0008142">
    <property type="term" value="F:oxysterol binding"/>
    <property type="evidence" value="ECO:0000250"/>
    <property type="project" value="UniProtKB"/>
</dbReference>
<dbReference type="GO" id="GO:0019901">
    <property type="term" value="F:protein kinase binding"/>
    <property type="evidence" value="ECO:0007669"/>
    <property type="project" value="TreeGrafter"/>
</dbReference>
<dbReference type="GO" id="GO:0044325">
    <property type="term" value="F:transmembrane transporter binding"/>
    <property type="evidence" value="ECO:0007669"/>
    <property type="project" value="TreeGrafter"/>
</dbReference>
<dbReference type="GO" id="GO:0070836">
    <property type="term" value="P:caveola assembly"/>
    <property type="evidence" value="ECO:0007669"/>
    <property type="project" value="InterPro"/>
</dbReference>
<dbReference type="GO" id="GO:0030154">
    <property type="term" value="P:cell differentiation"/>
    <property type="evidence" value="ECO:0007669"/>
    <property type="project" value="TreeGrafter"/>
</dbReference>
<dbReference type="GO" id="GO:0001937">
    <property type="term" value="P:negative regulation of endothelial cell proliferation"/>
    <property type="evidence" value="ECO:0007669"/>
    <property type="project" value="TreeGrafter"/>
</dbReference>
<dbReference type="GO" id="GO:0031623">
    <property type="term" value="P:receptor internalization"/>
    <property type="evidence" value="ECO:0000250"/>
    <property type="project" value="UniProtKB"/>
</dbReference>
<dbReference type="GO" id="GO:0051480">
    <property type="term" value="P:regulation of cytosolic calcium ion concentration"/>
    <property type="evidence" value="ECO:0007669"/>
    <property type="project" value="TreeGrafter"/>
</dbReference>
<dbReference type="GO" id="GO:0031295">
    <property type="term" value="P:T cell costimulation"/>
    <property type="evidence" value="ECO:0000250"/>
    <property type="project" value="UniProtKB"/>
</dbReference>
<dbReference type="InterPro" id="IPR001612">
    <property type="entry name" value="Caveolin"/>
</dbReference>
<dbReference type="InterPro" id="IPR018361">
    <property type="entry name" value="Caveolin_CS"/>
</dbReference>
<dbReference type="PANTHER" id="PTHR10844">
    <property type="entry name" value="CAVEOLIN"/>
    <property type="match status" value="1"/>
</dbReference>
<dbReference type="PANTHER" id="PTHR10844:SF18">
    <property type="entry name" value="CAVEOLIN-1"/>
    <property type="match status" value="1"/>
</dbReference>
<dbReference type="Pfam" id="PF01146">
    <property type="entry name" value="Caveolin"/>
    <property type="match status" value="1"/>
</dbReference>
<dbReference type="PROSITE" id="PS01210">
    <property type="entry name" value="CAVEOLIN"/>
    <property type="match status" value="1"/>
</dbReference>
<gene>
    <name type="primary">CAV1</name>
</gene>
<name>CAV1_DASNO</name>
<keyword id="KW-0007">Acetylation</keyword>
<keyword id="KW-1003">Cell membrane</keyword>
<keyword id="KW-0333">Golgi apparatus</keyword>
<keyword id="KW-1017">Isopeptide bond</keyword>
<keyword id="KW-0449">Lipoprotein</keyword>
<keyword id="KW-0472">Membrane</keyword>
<keyword id="KW-0564">Palmitate</keyword>
<keyword id="KW-0597">Phosphoprotein</keyword>
<keyword id="KW-0832">Ubl conjugation</keyword>
<feature type="initiator methionine" description="Removed" evidence="4">
    <location>
        <position position="1"/>
    </location>
</feature>
<feature type="chain" id="PRO_0000260366" description="Caveolin-1">
    <location>
        <begin position="2"/>
        <end position="178"/>
    </location>
</feature>
<feature type="topological domain" description="Cytoplasmic" evidence="6">
    <location>
        <begin position="2"/>
        <end position="104"/>
    </location>
</feature>
<feature type="intramembrane region" description="Helical" evidence="6">
    <location>
        <begin position="105"/>
        <end position="125"/>
    </location>
</feature>
<feature type="topological domain" description="Cytoplasmic" evidence="6">
    <location>
        <begin position="126"/>
        <end position="178"/>
    </location>
</feature>
<feature type="region of interest" description="Required for homooligomerization" evidence="4">
    <location>
        <begin position="2"/>
        <end position="94"/>
    </location>
</feature>
<feature type="region of interest" description="Interaction with CAVIN3" evidence="4">
    <location>
        <begin position="82"/>
        <end position="94"/>
    </location>
</feature>
<feature type="region of interest" description="Interacts with SPRY1, SPRY2, SPRY3 and SPRY4" evidence="3">
    <location>
        <begin position="131"/>
        <end position="142"/>
    </location>
</feature>
<feature type="region of interest" description="Interacts with SPRY1, SPRY2, and SPRY4" evidence="3">
    <location>
        <begin position="149"/>
        <end position="160"/>
    </location>
</feature>
<feature type="region of interest" description="Interacts with SPRY1, SPRY2, SPRY3 and SPRY4" evidence="3">
    <location>
        <begin position="167"/>
        <end position="178"/>
    </location>
</feature>
<feature type="modified residue" description="N-acetylserine" evidence="4">
    <location>
        <position position="2"/>
    </location>
</feature>
<feature type="modified residue" description="Phosphoserine" evidence="2">
    <location>
        <position position="2"/>
    </location>
</feature>
<feature type="modified residue" description="N6-acetyllysine; alternate" evidence="4">
    <location>
        <position position="5"/>
    </location>
</feature>
<feature type="modified residue" description="Phosphotyrosine" evidence="4">
    <location>
        <position position="6"/>
    </location>
</feature>
<feature type="modified residue" description="Phosphoserine" evidence="3">
    <location>
        <position position="9"/>
    </location>
</feature>
<feature type="modified residue" description="Phosphotyrosine; by ABL1" evidence="3">
    <location>
        <position position="14"/>
    </location>
</feature>
<feature type="modified residue" description="Phosphotyrosine" evidence="4">
    <location>
        <position position="25"/>
    </location>
</feature>
<feature type="lipid moiety-binding region" description="S-palmitoyl cysteine" evidence="1">
    <location>
        <position position="133"/>
    </location>
</feature>
<feature type="lipid moiety-binding region" description="S-palmitoyl cysteine" evidence="1">
    <location>
        <position position="143"/>
    </location>
</feature>
<feature type="lipid moiety-binding region" description="S-palmitoyl cysteine" evidence="1">
    <location>
        <position position="156"/>
    </location>
</feature>
<feature type="cross-link" description="Glycyl lysine isopeptide (Lys-Gly) (interchain with G-Cter in ubiquitin); alternate" evidence="4">
    <location>
        <position position="5"/>
    </location>
</feature>
<feature type="cross-link" description="Glycyl lysine isopeptide (Lys-Gly) (interchain with G-Cter in ubiquitin)" evidence="4">
    <location>
        <position position="26"/>
    </location>
</feature>
<feature type="cross-link" description="Glycyl lysine isopeptide (Lys-Gly) (interchain with G-Cter in ubiquitin)" evidence="4">
    <location>
        <position position="30"/>
    </location>
</feature>
<feature type="cross-link" description="Glycyl lysine isopeptide (Lys-Gly) (interchain with G-Cter in ubiquitin)" evidence="4">
    <location>
        <position position="39"/>
    </location>
</feature>
<feature type="cross-link" description="Glycyl lysine isopeptide (Lys-Gly) (interchain with G-Cter in ubiquitin)" evidence="4">
    <location>
        <position position="47"/>
    </location>
</feature>
<feature type="cross-link" description="Glycyl lysine isopeptide (Lys-Gly) (interchain with G-Cter in ubiquitin)" evidence="4">
    <location>
        <position position="57"/>
    </location>
</feature>
<accession>Q07E49</accession>
<sequence>MSGGKYVDSEGHLYTAPIREQGNIYKPNNKAMAEEMNEKQVYDAHTKEIDLVNRDPKHLNDDVVKIDFEDVIAEPEGTHSFDGIWKASFTTFTVTKYWFYRLLSTLFGIPMALIWGIYFAILSFLHIWAVVPCIKSFLIEIQCIGRVYSIYIHTFCDPLFEAVGKLFSNIRINMQKEI</sequence>
<comment type="function">
    <text evidence="3 4">May act as a scaffolding protein within caveolar membranes. Forms a stable heterooligomeric complex with CAV2 that targets to lipid rafts and drives caveolae formation. Mediates the recruitment of CAVIN proteins (CAVIN1/2/3/4) to the caveolae (By similarity). Interacts directly with G-protein alpha subunits and can functionally regulate their activity (By similarity). Involved in the costimulatory signal essential for T-cell receptor (TCR)-mediated T-cell activation. Its binding to DPP4 induces T-cell proliferation and NF-kappa-B activation in a T-cell receptor/CD3-dependent manner (By similarity). Recruits CTNNB1 to caveolar membranes and may regulate CTNNB1-mediated signaling through the Wnt pathway (By similarity). Negatively regulates TGFB1-mediated activation of SMAD2/3 by mediating the internalization of TGFBR1 from membrane rafts leading to its subsequent degradation (By similarity). Binds 20(S)-hydroxycholesterol (20(S)-OHC) (By similarity).</text>
</comment>
<comment type="subunit">
    <text evidence="2 3 4 5">Homooligomer. Interacts with GLIPR2. Interacts with NOSTRIN (By similarity). Interacts with SNAP25 and STX1A (By similarity). Interacts (via the N-terminus) with DPP4; the interaction is direct (By similarity). Interacts with CTNNB1, CDH1 and JUP. Interacts with PACSIN2; this interaction induces membrane tubulation (By similarity). Interacts with SLC7A9 (By similarity). Interacts with BMX and BTK. Interacts with TGFBR1. Interacts with CAVIN3 (via leucine-zipper domain) in a cholesterol-sensitive manner. Interacts with CAVIN1. Interacts with EHD2 in a cholesterol-dependent manner. Forms a ternary complex with UBXN6 and VCP; mediates CAV1 targeting to lysosomes for degradation. Interacts with ABCG1; this interaction regulates ABCG1-mediated cholesterol efflux (By similarity). Interacts with NEU3; this interaction enhances NEU3 sialidase activity within caveola. Interacts (via C-terminus) with SPRY1, SPRY2 (via C-terminus), SPRY3, and SPRY4 (By similarity). Interacts with IGFBP5; this interaction allows trafficking of IGFBP5 from the plasma membrane to the nucleus (By similarity).</text>
</comment>
<comment type="subcellular location">
    <subcellularLocation>
        <location evidence="1">Golgi apparatus membrane</location>
        <topology evidence="1">Peripheral membrane protein</topology>
    </subcellularLocation>
    <subcellularLocation>
        <location evidence="1">Cell membrane</location>
        <topology evidence="1">Peripheral membrane protein</topology>
    </subcellularLocation>
    <subcellularLocation>
        <location evidence="3">Membrane</location>
        <location evidence="3">Caveola</location>
        <topology evidence="1">Peripheral membrane protein</topology>
    </subcellularLocation>
    <subcellularLocation>
        <location evidence="4">Membrane raft</location>
    </subcellularLocation>
    <text evidence="1">Colocalized with DPP4 in membrane rafts. Potential hairpin-like structure in the membrane. Membrane protein of caveolae (By similarity).</text>
</comment>
<comment type="PTM">
    <text evidence="4">Phosphorylated at Tyr-14 by ABL1 in response to oxidative stress.</text>
</comment>
<comment type="PTM">
    <text evidence="4">Ubiquitinated. Undergo monoubiquitination and multi- and/or polyubiquitination. Monoubiquitination of N-terminal lysines promotes integration in a ternary complex with UBXN6 and VCP which promotes oligomeric CAV1 targeting to lysosomes for degradation. Ubiquitinated by ZNRF1; leading to degradation and modulation of the TLR4-mediated immune response.</text>
</comment>
<comment type="similarity">
    <text evidence="7">Belongs to the caveolin family.</text>
</comment>
<protein>
    <recommendedName>
        <fullName>Caveolin-1</fullName>
    </recommendedName>
</protein>
<proteinExistence type="inferred from homology"/>